<feature type="signal peptide" evidence="3">
    <location>
        <begin position="1"/>
        <end position="19"/>
    </location>
</feature>
<feature type="chain" id="PRO_5000094279" description="Pheromone-binding protein Gp-9" evidence="3">
    <location>
        <begin position="20"/>
        <end position="153"/>
    </location>
</feature>
<feature type="disulfide bond" evidence="2">
    <location>
        <begin position="37"/>
        <end position="77"/>
    </location>
</feature>
<feature type="disulfide bond" evidence="2">
    <location>
        <begin position="73"/>
        <end position="129"/>
    </location>
</feature>
<feature type="disulfide bond" evidence="2">
    <location>
        <begin position="118"/>
        <end position="138"/>
    </location>
</feature>
<accession>Q5ENZ6</accession>
<sequence>MKTFVLHIFIFALVAFASASRDSAKKIGSQYDNYATCLAEHSLTEDDIFSIGEVSSGQHKTNHEDTELHKNGCVMQCLLEKDGLMSGADYDEEKIREDYIKETGAQPGDQRIEALNACMQETKDMEDKCDKSLLLVACVLAAEAVLADSNEGA</sequence>
<proteinExistence type="inferred from homology"/>
<evidence type="ECO:0000250" key="1"/>
<evidence type="ECO:0000250" key="2">
    <source>
        <dbReference type="UniProtKB" id="P20797"/>
    </source>
</evidence>
<evidence type="ECO:0000250" key="3">
    <source>
        <dbReference type="UniProtKB" id="Q8WP90"/>
    </source>
</evidence>
<evidence type="ECO:0000255" key="4"/>
<evidence type="ECO:0000305" key="5"/>
<evidence type="ECO:0000312" key="6">
    <source>
        <dbReference type="EMBL" id="AAW80702.1"/>
    </source>
</evidence>
<name>PBGP9_SOLS0</name>
<comment type="function">
    <text evidence="3">Colony queen number, a major feature of social organization, is associated with worker genotype for Gp-9. Colonies are headed by either a single reproductive queen (monogyne form) or multiple queens (polygyne form). Differences in worker Gp-9 genotypes between social forms may cause differences in workers' abilities to recognize queens and regulate their numbers (By similarity).</text>
</comment>
<comment type="subunit">
    <text evidence="2">Homodimer.</text>
</comment>
<comment type="subcellular location">
    <subcellularLocation>
        <location evidence="1">Secreted</location>
    </subcellularLocation>
</comment>
<comment type="similarity">
    <text evidence="4">Belongs to the PBP/GOBP family.</text>
</comment>
<gene>
    <name evidence="6" type="primary">Gp-9</name>
</gene>
<dbReference type="EMBL" id="AY818635">
    <property type="protein sequence ID" value="AAW80702.1"/>
    <property type="molecule type" value="Genomic_DNA"/>
</dbReference>
<dbReference type="SMR" id="Q5ENZ6"/>
<dbReference type="GO" id="GO:0005615">
    <property type="term" value="C:extracellular space"/>
    <property type="evidence" value="ECO:0000250"/>
    <property type="project" value="UniProtKB"/>
</dbReference>
<dbReference type="GO" id="GO:0005550">
    <property type="term" value="F:pheromone binding"/>
    <property type="evidence" value="ECO:0007669"/>
    <property type="project" value="UniProtKB-KW"/>
</dbReference>
<dbReference type="GO" id="GO:0019236">
    <property type="term" value="P:response to pheromone"/>
    <property type="evidence" value="ECO:0007669"/>
    <property type="project" value="UniProtKB-KW"/>
</dbReference>
<dbReference type="GO" id="GO:0035176">
    <property type="term" value="P:social behavior"/>
    <property type="evidence" value="ECO:0000250"/>
    <property type="project" value="UniProtKB"/>
</dbReference>
<dbReference type="CDD" id="cd23992">
    <property type="entry name" value="PBP_GOBP"/>
    <property type="match status" value="1"/>
</dbReference>
<dbReference type="FunFam" id="1.10.238.20:FF:000004">
    <property type="entry name" value="Pheromone-binding protein Gp-9"/>
    <property type="match status" value="1"/>
</dbReference>
<dbReference type="Gene3D" id="1.10.238.20">
    <property type="entry name" value="Pheromone/general odorant binding protein domain"/>
    <property type="match status" value="1"/>
</dbReference>
<dbReference type="InterPro" id="IPR006170">
    <property type="entry name" value="PBP/GOBP"/>
</dbReference>
<dbReference type="InterPro" id="IPR036728">
    <property type="entry name" value="PBP_GOBP_sf"/>
</dbReference>
<dbReference type="InterPro" id="IPR022354">
    <property type="entry name" value="Pheromone-bd_protein_Gp-9"/>
</dbReference>
<dbReference type="Pfam" id="PF01395">
    <property type="entry name" value="PBP_GOBP"/>
    <property type="match status" value="1"/>
</dbReference>
<dbReference type="PRINTS" id="PR02007">
    <property type="entry name" value="ODORANTBPGP9"/>
</dbReference>
<dbReference type="SUPFAM" id="SSF47565">
    <property type="entry name" value="Insect pheromone/odorant-binding proteins"/>
    <property type="match status" value="1"/>
</dbReference>
<organism>
    <name type="scientific">Solenopsis sp. (strain B0-153)</name>
    <name type="common">Fire ant</name>
    <dbReference type="NCBI Taxonomy" id="310441"/>
    <lineage>
        <taxon>Eukaryota</taxon>
        <taxon>Metazoa</taxon>
        <taxon>Ecdysozoa</taxon>
        <taxon>Arthropoda</taxon>
        <taxon>Hexapoda</taxon>
        <taxon>Insecta</taxon>
        <taxon>Pterygota</taxon>
        <taxon>Neoptera</taxon>
        <taxon>Endopterygota</taxon>
        <taxon>Hymenoptera</taxon>
        <taxon>Apocrita</taxon>
        <taxon>Aculeata</taxon>
        <taxon>Formicoidea</taxon>
        <taxon>Formicidae</taxon>
        <taxon>Myrmicinae</taxon>
        <taxon>Solenopsis</taxon>
    </lineage>
</organism>
<reference evidence="5 6" key="1">
    <citation type="journal article" date="2005" name="Mol. Biol. Evol.">
        <title>Molecular evolutionary analyses of the odorant-binding protein gene Gp-9 in fire ants and other Solenopsis species.</title>
        <authorList>
            <person name="Krieger M.J.B."/>
            <person name="Ross K.G."/>
        </authorList>
    </citation>
    <scope>NUCLEOTIDE SEQUENCE [GENOMIC DNA] (ALLELE B2)</scope>
</reference>
<protein>
    <recommendedName>
        <fullName>Pheromone-binding protein Gp-9</fullName>
        <shortName>PBP</shortName>
    </recommendedName>
    <alternativeName>
        <fullName>Putative odorant-binding protein Gp-9</fullName>
    </alternativeName>
</protein>
<keyword id="KW-0085">Behavior</keyword>
<keyword id="KW-1015">Disulfide bond</keyword>
<keyword id="KW-0589">Pheromone response</keyword>
<keyword id="KW-0590">Pheromone-binding</keyword>
<keyword id="KW-0964">Secreted</keyword>
<keyword id="KW-0732">Signal</keyword>
<keyword id="KW-0813">Transport</keyword>